<name>DNAK_XANOM</name>
<dbReference type="EMBL" id="AP008229">
    <property type="protein sequence ID" value="BAE68668.1"/>
    <property type="molecule type" value="Genomic_DNA"/>
</dbReference>
<dbReference type="RefSeq" id="WP_011408354.1">
    <property type="nucleotide sequence ID" value="NC_007705.1"/>
</dbReference>
<dbReference type="SMR" id="Q2P459"/>
<dbReference type="KEGG" id="xom:XOO1913"/>
<dbReference type="HOGENOM" id="CLU_005965_2_1_6"/>
<dbReference type="GO" id="GO:0005524">
    <property type="term" value="F:ATP binding"/>
    <property type="evidence" value="ECO:0007669"/>
    <property type="project" value="UniProtKB-UniRule"/>
</dbReference>
<dbReference type="GO" id="GO:0140662">
    <property type="term" value="F:ATP-dependent protein folding chaperone"/>
    <property type="evidence" value="ECO:0007669"/>
    <property type="project" value="InterPro"/>
</dbReference>
<dbReference type="GO" id="GO:0051082">
    <property type="term" value="F:unfolded protein binding"/>
    <property type="evidence" value="ECO:0007669"/>
    <property type="project" value="InterPro"/>
</dbReference>
<dbReference type="CDD" id="cd10234">
    <property type="entry name" value="ASKHA_NBD_HSP70_DnaK-like"/>
    <property type="match status" value="1"/>
</dbReference>
<dbReference type="FunFam" id="2.60.34.10:FF:000014">
    <property type="entry name" value="Chaperone protein DnaK HSP70"/>
    <property type="match status" value="1"/>
</dbReference>
<dbReference type="FunFam" id="3.30.30.30:FF:000003">
    <property type="entry name" value="Heat shock protein 9"/>
    <property type="match status" value="1"/>
</dbReference>
<dbReference type="FunFam" id="1.20.1270.10:FF:000001">
    <property type="entry name" value="Molecular chaperone DnaK"/>
    <property type="match status" value="1"/>
</dbReference>
<dbReference type="FunFam" id="3.30.420.40:FF:000004">
    <property type="entry name" value="Molecular chaperone DnaK"/>
    <property type="match status" value="1"/>
</dbReference>
<dbReference type="FunFam" id="3.90.640.10:FF:000003">
    <property type="entry name" value="Molecular chaperone DnaK"/>
    <property type="match status" value="1"/>
</dbReference>
<dbReference type="Gene3D" id="1.20.1270.10">
    <property type="match status" value="1"/>
</dbReference>
<dbReference type="Gene3D" id="3.30.420.40">
    <property type="match status" value="2"/>
</dbReference>
<dbReference type="Gene3D" id="3.90.640.10">
    <property type="entry name" value="Actin, Chain A, domain 4"/>
    <property type="match status" value="1"/>
</dbReference>
<dbReference type="Gene3D" id="2.60.34.10">
    <property type="entry name" value="Substrate Binding Domain Of DNAk, Chain A, domain 1"/>
    <property type="match status" value="1"/>
</dbReference>
<dbReference type="HAMAP" id="MF_00332">
    <property type="entry name" value="DnaK"/>
    <property type="match status" value="1"/>
</dbReference>
<dbReference type="InterPro" id="IPR043129">
    <property type="entry name" value="ATPase_NBD"/>
</dbReference>
<dbReference type="InterPro" id="IPR012725">
    <property type="entry name" value="Chaperone_DnaK"/>
</dbReference>
<dbReference type="InterPro" id="IPR018181">
    <property type="entry name" value="Heat_shock_70_CS"/>
</dbReference>
<dbReference type="InterPro" id="IPR029048">
    <property type="entry name" value="HSP70_C_sf"/>
</dbReference>
<dbReference type="InterPro" id="IPR029047">
    <property type="entry name" value="HSP70_peptide-bd_sf"/>
</dbReference>
<dbReference type="InterPro" id="IPR013126">
    <property type="entry name" value="Hsp_70_fam"/>
</dbReference>
<dbReference type="NCBIfam" id="NF001413">
    <property type="entry name" value="PRK00290.1"/>
    <property type="match status" value="1"/>
</dbReference>
<dbReference type="NCBIfam" id="NF003520">
    <property type="entry name" value="PRK05183.1"/>
    <property type="match status" value="1"/>
</dbReference>
<dbReference type="NCBIfam" id="TIGR02350">
    <property type="entry name" value="prok_dnaK"/>
    <property type="match status" value="1"/>
</dbReference>
<dbReference type="PANTHER" id="PTHR19375">
    <property type="entry name" value="HEAT SHOCK PROTEIN 70KDA"/>
    <property type="match status" value="1"/>
</dbReference>
<dbReference type="Pfam" id="PF00012">
    <property type="entry name" value="HSP70"/>
    <property type="match status" value="1"/>
</dbReference>
<dbReference type="PRINTS" id="PR00301">
    <property type="entry name" value="HEATSHOCK70"/>
</dbReference>
<dbReference type="SUPFAM" id="SSF53067">
    <property type="entry name" value="Actin-like ATPase domain"/>
    <property type="match status" value="2"/>
</dbReference>
<dbReference type="SUPFAM" id="SSF100920">
    <property type="entry name" value="Heat shock protein 70kD (HSP70), peptide-binding domain"/>
    <property type="match status" value="1"/>
</dbReference>
<dbReference type="PROSITE" id="PS00297">
    <property type="entry name" value="HSP70_1"/>
    <property type="match status" value="1"/>
</dbReference>
<dbReference type="PROSITE" id="PS00329">
    <property type="entry name" value="HSP70_2"/>
    <property type="match status" value="1"/>
</dbReference>
<dbReference type="PROSITE" id="PS01036">
    <property type="entry name" value="HSP70_3"/>
    <property type="match status" value="1"/>
</dbReference>
<proteinExistence type="inferred from homology"/>
<protein>
    <recommendedName>
        <fullName evidence="1">Chaperone protein DnaK</fullName>
    </recommendedName>
    <alternativeName>
        <fullName evidence="1">HSP70</fullName>
    </alternativeName>
    <alternativeName>
        <fullName evidence="1">Heat shock 70 kDa protein</fullName>
    </alternativeName>
    <alternativeName>
        <fullName evidence="1">Heat shock protein 70</fullName>
    </alternativeName>
</protein>
<keyword id="KW-0067">ATP-binding</keyword>
<keyword id="KW-0143">Chaperone</keyword>
<keyword id="KW-0547">Nucleotide-binding</keyword>
<keyword id="KW-0597">Phosphoprotein</keyword>
<keyword id="KW-0346">Stress response</keyword>
<comment type="function">
    <text evidence="1">Acts as a chaperone.</text>
</comment>
<comment type="induction">
    <text evidence="1">By stress conditions e.g. heat shock.</text>
</comment>
<comment type="similarity">
    <text evidence="1">Belongs to the heat shock protein 70 family.</text>
</comment>
<accession>Q2P459</accession>
<sequence>MGKIIGIDLGTTNSCVSIMDGGKARVIENSEGDRTTPSIVAYTKDGEVLVGASAKRQAVTNPKNTFYAVKRLIGRKFTDAEVQKDISHVPYGILAHDNGDAWVQTSDAKRMAPQEISARVLEKMKKTAEDYLGEKVTEAVITVPAYFNDSQRQATKDAGRIAGLDVKRIINEPTAAALAYGLDKKGGDRKIAVYDLGGGTFDVSIIEIAEVDGEKQFEVLATNGDTFLGGEDFDNRVIEYLVDEFNKDQGIDLRKDPLALQRLKDAAERAKIELSSSQQTEVNLPYVTADASGPKHLNIKLTRAKLEALVEDLVKKSIEPCRTALNDAGLRASDINEVILVGGQTRMPKVQQAVADFFGKEPRKDVNPDEAVAVGAAIQGGVLAGDVKDVLLLDVTPLSLGIETMGGVFTKIIEKNTTIPTKASQTFSTAEDNQSAVTVHVLQGEREQARFNKSLAKFDLSGIEPAPRGMPQVEVSFDIDANGILHVSAKDKKTNKEQKVEIKAGSGLSDEEIQRMVADAEANREEDKKFHELVQARNQADGLIHATRTAITEHGSKVGGDVIGKVEAALSDLETAMKGDDKAQIEARTKTLEEAGQSLYAAAAAAEQGGSADAASGNAQASKAADDVVDAEFTEVKDDKK</sequence>
<evidence type="ECO:0000255" key="1">
    <source>
        <dbReference type="HAMAP-Rule" id="MF_00332"/>
    </source>
</evidence>
<evidence type="ECO:0000256" key="2">
    <source>
        <dbReference type="SAM" id="MobiDB-lite"/>
    </source>
</evidence>
<organism>
    <name type="scientific">Xanthomonas oryzae pv. oryzae (strain MAFF 311018)</name>
    <dbReference type="NCBI Taxonomy" id="342109"/>
    <lineage>
        <taxon>Bacteria</taxon>
        <taxon>Pseudomonadati</taxon>
        <taxon>Pseudomonadota</taxon>
        <taxon>Gammaproteobacteria</taxon>
        <taxon>Lysobacterales</taxon>
        <taxon>Lysobacteraceae</taxon>
        <taxon>Xanthomonas</taxon>
    </lineage>
</organism>
<feature type="chain" id="PRO_1000059698" description="Chaperone protein DnaK">
    <location>
        <begin position="1"/>
        <end position="641"/>
    </location>
</feature>
<feature type="region of interest" description="Disordered" evidence="2">
    <location>
        <begin position="605"/>
        <end position="627"/>
    </location>
</feature>
<feature type="compositionally biased region" description="Low complexity" evidence="2">
    <location>
        <begin position="605"/>
        <end position="623"/>
    </location>
</feature>
<feature type="modified residue" description="Phosphothreonine; by autocatalysis" evidence="1">
    <location>
        <position position="200"/>
    </location>
</feature>
<reference key="1">
    <citation type="journal article" date="2005" name="Jpn. Agric. Res. Q.">
        <title>Genome sequence of Xanthomonas oryzae pv. oryzae suggests contribution of large numbers of effector genes and insertion sequences to its race diversity.</title>
        <authorList>
            <person name="Ochiai H."/>
            <person name="Inoue Y."/>
            <person name="Takeya M."/>
            <person name="Sasaki A."/>
            <person name="Kaku H."/>
        </authorList>
    </citation>
    <scope>NUCLEOTIDE SEQUENCE [LARGE SCALE GENOMIC DNA]</scope>
    <source>
        <strain>MAFF 311018</strain>
    </source>
</reference>
<gene>
    <name evidence="1" type="primary">dnaK</name>
    <name type="ordered locus">XOO1913</name>
</gene>